<feature type="chain" id="PRO_1000202963" description="Deoxyribose-phosphate aldolase">
    <location>
        <begin position="1"/>
        <end position="219"/>
    </location>
</feature>
<feature type="active site" description="Proton donor/acceptor" evidence="1">
    <location>
        <position position="89"/>
    </location>
</feature>
<feature type="active site" description="Schiff-base intermediate with acetaldehyde" evidence="1">
    <location>
        <position position="151"/>
    </location>
</feature>
<feature type="active site" description="Proton donor/acceptor" evidence="1">
    <location>
        <position position="180"/>
    </location>
</feature>
<organism>
    <name type="scientific">Coprothermobacter proteolyticus (strain ATCC 35245 / DSM 5265 / OCM 4 / BT)</name>
    <dbReference type="NCBI Taxonomy" id="309798"/>
    <lineage>
        <taxon>Bacteria</taxon>
        <taxon>Pseudomonadati</taxon>
        <taxon>Coprothermobacterota</taxon>
        <taxon>Coprothermobacteria</taxon>
        <taxon>Coprothermobacterales</taxon>
        <taxon>Coprothermobacteraceae</taxon>
        <taxon>Coprothermobacter</taxon>
    </lineage>
</organism>
<evidence type="ECO:0000255" key="1">
    <source>
        <dbReference type="HAMAP-Rule" id="MF_00114"/>
    </source>
</evidence>
<dbReference type="EC" id="4.1.2.4" evidence="1"/>
<dbReference type="EMBL" id="CP001145">
    <property type="protein sequence ID" value="ACI17205.1"/>
    <property type="molecule type" value="Genomic_DNA"/>
</dbReference>
<dbReference type="RefSeq" id="WP_012543857.1">
    <property type="nucleotide sequence ID" value="NC_011295.1"/>
</dbReference>
<dbReference type="SMR" id="B5Y7V3"/>
<dbReference type="STRING" id="309798.COPRO5265_0491"/>
<dbReference type="KEGG" id="cpo:COPRO5265_0491"/>
<dbReference type="eggNOG" id="COG0274">
    <property type="taxonomic scope" value="Bacteria"/>
</dbReference>
<dbReference type="HOGENOM" id="CLU_053595_0_1_9"/>
<dbReference type="OrthoDB" id="9778711at2"/>
<dbReference type="UniPathway" id="UPA00002">
    <property type="reaction ID" value="UER00468"/>
</dbReference>
<dbReference type="Proteomes" id="UP000001732">
    <property type="component" value="Chromosome"/>
</dbReference>
<dbReference type="GO" id="GO:0005737">
    <property type="term" value="C:cytoplasm"/>
    <property type="evidence" value="ECO:0007669"/>
    <property type="project" value="UniProtKB-SubCell"/>
</dbReference>
<dbReference type="GO" id="GO:0004139">
    <property type="term" value="F:deoxyribose-phosphate aldolase activity"/>
    <property type="evidence" value="ECO:0007669"/>
    <property type="project" value="UniProtKB-UniRule"/>
</dbReference>
<dbReference type="GO" id="GO:0006018">
    <property type="term" value="P:2-deoxyribose 1-phosphate catabolic process"/>
    <property type="evidence" value="ECO:0007669"/>
    <property type="project" value="UniProtKB-UniRule"/>
</dbReference>
<dbReference type="GO" id="GO:0016052">
    <property type="term" value="P:carbohydrate catabolic process"/>
    <property type="evidence" value="ECO:0007669"/>
    <property type="project" value="TreeGrafter"/>
</dbReference>
<dbReference type="GO" id="GO:0009264">
    <property type="term" value="P:deoxyribonucleotide catabolic process"/>
    <property type="evidence" value="ECO:0007669"/>
    <property type="project" value="InterPro"/>
</dbReference>
<dbReference type="CDD" id="cd00959">
    <property type="entry name" value="DeoC"/>
    <property type="match status" value="1"/>
</dbReference>
<dbReference type="FunFam" id="3.20.20.70:FF:000044">
    <property type="entry name" value="Deoxyribose-phosphate aldolase"/>
    <property type="match status" value="1"/>
</dbReference>
<dbReference type="Gene3D" id="3.20.20.70">
    <property type="entry name" value="Aldolase class I"/>
    <property type="match status" value="1"/>
</dbReference>
<dbReference type="HAMAP" id="MF_00114">
    <property type="entry name" value="DeoC_type1"/>
    <property type="match status" value="1"/>
</dbReference>
<dbReference type="InterPro" id="IPR013785">
    <property type="entry name" value="Aldolase_TIM"/>
</dbReference>
<dbReference type="InterPro" id="IPR011343">
    <property type="entry name" value="DeoC"/>
</dbReference>
<dbReference type="InterPro" id="IPR002915">
    <property type="entry name" value="DeoC/FbaB/LacD_aldolase"/>
</dbReference>
<dbReference type="InterPro" id="IPR028581">
    <property type="entry name" value="DeoC_typeI"/>
</dbReference>
<dbReference type="NCBIfam" id="TIGR00126">
    <property type="entry name" value="deoC"/>
    <property type="match status" value="1"/>
</dbReference>
<dbReference type="PANTHER" id="PTHR10889">
    <property type="entry name" value="DEOXYRIBOSE-PHOSPHATE ALDOLASE"/>
    <property type="match status" value="1"/>
</dbReference>
<dbReference type="PANTHER" id="PTHR10889:SF1">
    <property type="entry name" value="DEOXYRIBOSE-PHOSPHATE ALDOLASE"/>
    <property type="match status" value="1"/>
</dbReference>
<dbReference type="Pfam" id="PF01791">
    <property type="entry name" value="DeoC"/>
    <property type="match status" value="1"/>
</dbReference>
<dbReference type="PIRSF" id="PIRSF001357">
    <property type="entry name" value="DeoC"/>
    <property type="match status" value="1"/>
</dbReference>
<dbReference type="SMART" id="SM01133">
    <property type="entry name" value="DeoC"/>
    <property type="match status" value="1"/>
</dbReference>
<dbReference type="SUPFAM" id="SSF51569">
    <property type="entry name" value="Aldolase"/>
    <property type="match status" value="1"/>
</dbReference>
<comment type="function">
    <text evidence="1">Catalyzes a reversible aldol reaction between acetaldehyde and D-glyceraldehyde 3-phosphate to generate 2-deoxy-D-ribose 5-phosphate.</text>
</comment>
<comment type="catalytic activity">
    <reaction evidence="1">
        <text>2-deoxy-D-ribose 5-phosphate = D-glyceraldehyde 3-phosphate + acetaldehyde</text>
        <dbReference type="Rhea" id="RHEA:12821"/>
        <dbReference type="ChEBI" id="CHEBI:15343"/>
        <dbReference type="ChEBI" id="CHEBI:59776"/>
        <dbReference type="ChEBI" id="CHEBI:62877"/>
        <dbReference type="EC" id="4.1.2.4"/>
    </reaction>
</comment>
<comment type="pathway">
    <text evidence="1">Carbohydrate degradation; 2-deoxy-D-ribose 1-phosphate degradation; D-glyceraldehyde 3-phosphate and acetaldehyde from 2-deoxy-alpha-D-ribose 1-phosphate: step 2/2.</text>
</comment>
<comment type="subcellular location">
    <subcellularLocation>
        <location evidence="1">Cytoplasm</location>
    </subcellularLocation>
</comment>
<comment type="similarity">
    <text evidence="1">Belongs to the DeoC/FbaB aldolase family. DeoC type 1 subfamily.</text>
</comment>
<accession>B5Y7V3</accession>
<proteinExistence type="inferred from homology"/>
<keyword id="KW-0963">Cytoplasm</keyword>
<keyword id="KW-0456">Lyase</keyword>
<keyword id="KW-1185">Reference proteome</keyword>
<keyword id="KW-0704">Schiff base</keyword>
<sequence>MEYNRLIDHTLLKADATVEQIEKLCKEALQYNFFSVCVNSAFVPLAKSFLEGSDVKVATTIGFPLGASATAVKAFEVEQALKEGADEFDMVINVGWLKSKLYRLVHEDIAEVVKAAGGKVVKVIIETCYLTDDEKKIASSIAAAAGAHYVKTSTGFGTGGATVEDVQLIRSVVGPNIGVKASGGIRDAATLKAMVDAGANRIGASASVKIMEELRIEGN</sequence>
<name>DEOC_COPPD</name>
<gene>
    <name evidence="1" type="primary">deoC</name>
    <name type="ordered locus">COPRO5265_0491</name>
</gene>
<reference key="1">
    <citation type="submission" date="2008-08" db="EMBL/GenBank/DDBJ databases">
        <title>The complete genome sequence of Coprothermobacter proteolyticus strain ATCC 5245 / DSM 5265 / BT.</title>
        <authorList>
            <person name="Dodson R.J."/>
            <person name="Durkin A.S."/>
            <person name="Wu M."/>
            <person name="Eisen J."/>
            <person name="Sutton G."/>
        </authorList>
    </citation>
    <scope>NUCLEOTIDE SEQUENCE [LARGE SCALE GENOMIC DNA]</scope>
    <source>
        <strain>ATCC 35245 / DSM 5265 / OCM 4 / BT</strain>
    </source>
</reference>
<protein>
    <recommendedName>
        <fullName evidence="1">Deoxyribose-phosphate aldolase</fullName>
        <shortName evidence="1">DERA</shortName>
        <ecNumber evidence="1">4.1.2.4</ecNumber>
    </recommendedName>
    <alternativeName>
        <fullName evidence="1">2-deoxy-D-ribose 5-phosphate aldolase</fullName>
    </alternativeName>
    <alternativeName>
        <fullName evidence="1">Phosphodeoxyriboaldolase</fullName>
        <shortName evidence="1">Deoxyriboaldolase</shortName>
    </alternativeName>
</protein>